<organism>
    <name type="scientific">Schizosaccharomyces pombe (strain 972 / ATCC 24843)</name>
    <name type="common">Fission yeast</name>
    <dbReference type="NCBI Taxonomy" id="284812"/>
    <lineage>
        <taxon>Eukaryota</taxon>
        <taxon>Fungi</taxon>
        <taxon>Dikarya</taxon>
        <taxon>Ascomycota</taxon>
        <taxon>Taphrinomycotina</taxon>
        <taxon>Schizosaccharomycetes</taxon>
        <taxon>Schizosaccharomycetales</taxon>
        <taxon>Schizosaccharomycetaceae</taxon>
        <taxon>Schizosaccharomyces</taxon>
    </lineage>
</organism>
<keyword id="KW-0963">Cytoplasm</keyword>
<keyword id="KW-0256">Endoplasmic reticulum</keyword>
<keyword id="KW-0378">Hydrolase</keyword>
<keyword id="KW-0551">Lipid droplet</keyword>
<keyword id="KW-0472">Membrane</keyword>
<keyword id="KW-0496">Mitochondrion</keyword>
<keyword id="KW-1000">Mitochondrion outer membrane</keyword>
<keyword id="KW-0597">Phosphoprotein</keyword>
<keyword id="KW-1185">Reference proteome</keyword>
<sequence>MADLYTKDWTDVKDKPVARVVFIHGFGEHVNAYPEFFEALNERNIEVYTFDQRGFGHSRKGGPKKQGCTGGWSLVFPDLDYQILRASDTELPLFLWGHSMGGGLALRYGISGTHRHKLAGVIAQAPMLRCHPDTEPNFLLRKALTLVSKVHPNFLFDSDVQSQHITRDEAVNQRLQDDPLVSSVGSLQVFSDMLNRGTKTIELAPQFFLPLLITHGTDDNVTCSDSSKEFYENAGTKDKTYQSYPGFYHSLHIEKKPEVYEYLDKVAAWIYEHSKPSETVKSEQETAVEHPKPTATTSAPSASPTGVPVEEESHKATSDAVPPAEAKPEPVPASAAERAPTSESTTVPETIVASTTKVISEPAPRVTTAATADIVTNK</sequence>
<comment type="function">
    <text evidence="1">Converts monoacylglycerides (MAG) to free fatty acids and glycerol. Has a strong preference for monounsaturated monoglycerides. Required for efficient degradation of MAG, short-lived intermediates of glycerolipid metabolism which may also function as lipid signaling molecules. Controls inactivation of the signaling lipid N-palmitoylethanolamine (PEA). Involved in fatty acid ethyl ester (FAEE) catabolism. FAEEs are non-oxidative metabolites of ethanol that are transiently incorporated into lipid droplets (LDs). Their mobilization by LD-resident FAEE hydrolases facilitates a controlled metabolism of these potentially toxic lipid metabolites.</text>
</comment>
<comment type="catalytic activity">
    <reaction evidence="1">
        <text>Hydrolyzes glycerol monoesters of long-chain fatty acids.</text>
        <dbReference type="EC" id="3.1.1.23"/>
    </reaction>
</comment>
<comment type="pathway">
    <text evidence="1">Glycerolipid metabolism; triacylglycerol degradation.</text>
</comment>
<comment type="subcellular location">
    <subcellularLocation>
        <location evidence="1">Lipid droplet</location>
    </subcellularLocation>
    <subcellularLocation>
        <location evidence="4">Cytoplasm</location>
    </subcellularLocation>
    <subcellularLocation>
        <location evidence="1">Endoplasmic reticulum</location>
    </subcellularLocation>
    <subcellularLocation>
        <location evidence="1">Mitochondrion outer membrane</location>
    </subcellularLocation>
    <text evidence="1">Although the protein is identified in the cytoplasm, several membrane systems and lipid droplets, MGL activity is only measured in membrane fractions and lipid droplets.</text>
</comment>
<comment type="similarity">
    <text evidence="2">Belongs to the AB hydrolase superfamily. Monoacylglycerol lipase family.</text>
</comment>
<name>MGLL_SCHPO</name>
<evidence type="ECO:0000250" key="1">
    <source>
        <dbReference type="UniProtKB" id="P28321"/>
    </source>
</evidence>
<evidence type="ECO:0000255" key="2"/>
<evidence type="ECO:0000256" key="3">
    <source>
        <dbReference type="SAM" id="MobiDB-lite"/>
    </source>
</evidence>
<evidence type="ECO:0000269" key="4">
    <source>
    </source>
</evidence>
<evidence type="ECO:0000269" key="5">
    <source>
    </source>
</evidence>
<evidence type="ECO:0000305" key="6"/>
<evidence type="ECO:0000312" key="7">
    <source>
        <dbReference type="EMBL" id="CAA21960.1"/>
    </source>
</evidence>
<reference evidence="7" key="1">
    <citation type="journal article" date="2002" name="Nature">
        <title>The genome sequence of Schizosaccharomyces pombe.</title>
        <authorList>
            <person name="Wood V."/>
            <person name="Gwilliam R."/>
            <person name="Rajandream M.A."/>
            <person name="Lyne M.H."/>
            <person name="Lyne R."/>
            <person name="Stewart A."/>
            <person name="Sgouros J.G."/>
            <person name="Peat N."/>
            <person name="Hayles J."/>
            <person name="Baker S.G."/>
            <person name="Basham D."/>
            <person name="Bowman S."/>
            <person name="Brooks K."/>
            <person name="Brown D."/>
            <person name="Brown S."/>
            <person name="Chillingworth T."/>
            <person name="Churcher C.M."/>
            <person name="Collins M."/>
            <person name="Connor R."/>
            <person name="Cronin A."/>
            <person name="Davis P."/>
            <person name="Feltwell T."/>
            <person name="Fraser A."/>
            <person name="Gentles S."/>
            <person name="Goble A."/>
            <person name="Hamlin N."/>
            <person name="Harris D.E."/>
            <person name="Hidalgo J."/>
            <person name="Hodgson G."/>
            <person name="Holroyd S."/>
            <person name="Hornsby T."/>
            <person name="Howarth S."/>
            <person name="Huckle E.J."/>
            <person name="Hunt S."/>
            <person name="Jagels K."/>
            <person name="James K.D."/>
            <person name="Jones L."/>
            <person name="Jones M."/>
            <person name="Leather S."/>
            <person name="McDonald S."/>
            <person name="McLean J."/>
            <person name="Mooney P."/>
            <person name="Moule S."/>
            <person name="Mungall K.L."/>
            <person name="Murphy L.D."/>
            <person name="Niblett D."/>
            <person name="Odell C."/>
            <person name="Oliver K."/>
            <person name="O'Neil S."/>
            <person name="Pearson D."/>
            <person name="Quail M.A."/>
            <person name="Rabbinowitsch E."/>
            <person name="Rutherford K.M."/>
            <person name="Rutter S."/>
            <person name="Saunders D."/>
            <person name="Seeger K."/>
            <person name="Sharp S."/>
            <person name="Skelton J."/>
            <person name="Simmonds M.N."/>
            <person name="Squares R."/>
            <person name="Squares S."/>
            <person name="Stevens K."/>
            <person name="Taylor K."/>
            <person name="Taylor R.G."/>
            <person name="Tivey A."/>
            <person name="Walsh S.V."/>
            <person name="Warren T."/>
            <person name="Whitehead S."/>
            <person name="Woodward J.R."/>
            <person name="Volckaert G."/>
            <person name="Aert R."/>
            <person name="Robben J."/>
            <person name="Grymonprez B."/>
            <person name="Weltjens I."/>
            <person name="Vanstreels E."/>
            <person name="Rieger M."/>
            <person name="Schaefer M."/>
            <person name="Mueller-Auer S."/>
            <person name="Gabel C."/>
            <person name="Fuchs M."/>
            <person name="Duesterhoeft A."/>
            <person name="Fritzc C."/>
            <person name="Holzer E."/>
            <person name="Moestl D."/>
            <person name="Hilbert H."/>
            <person name="Borzym K."/>
            <person name="Langer I."/>
            <person name="Beck A."/>
            <person name="Lehrach H."/>
            <person name="Reinhardt R."/>
            <person name="Pohl T.M."/>
            <person name="Eger P."/>
            <person name="Zimmermann W."/>
            <person name="Wedler H."/>
            <person name="Wambutt R."/>
            <person name="Purnelle B."/>
            <person name="Goffeau A."/>
            <person name="Cadieu E."/>
            <person name="Dreano S."/>
            <person name="Gloux S."/>
            <person name="Lelaure V."/>
            <person name="Mottier S."/>
            <person name="Galibert F."/>
            <person name="Aves S.J."/>
            <person name="Xiang Z."/>
            <person name="Hunt C."/>
            <person name="Moore K."/>
            <person name="Hurst S.M."/>
            <person name="Lucas M."/>
            <person name="Rochet M."/>
            <person name="Gaillardin C."/>
            <person name="Tallada V.A."/>
            <person name="Garzon A."/>
            <person name="Thode G."/>
            <person name="Daga R.R."/>
            <person name="Cruzado L."/>
            <person name="Jimenez J."/>
            <person name="Sanchez M."/>
            <person name="del Rey F."/>
            <person name="Benito J."/>
            <person name="Dominguez A."/>
            <person name="Revuelta J.L."/>
            <person name="Moreno S."/>
            <person name="Armstrong J."/>
            <person name="Forsburg S.L."/>
            <person name="Cerutti L."/>
            <person name="Lowe T."/>
            <person name="McCombie W.R."/>
            <person name="Paulsen I."/>
            <person name="Potashkin J."/>
            <person name="Shpakovski G.V."/>
            <person name="Ussery D."/>
            <person name="Barrell B.G."/>
            <person name="Nurse P."/>
        </authorList>
    </citation>
    <scope>NUCLEOTIDE SEQUENCE [LARGE SCALE GENOMIC DNA]</scope>
    <source>
        <strain>972 / ATCC 24843</strain>
    </source>
</reference>
<reference evidence="6" key="2">
    <citation type="journal article" date="2006" name="Nat. Biotechnol.">
        <title>ORFeome cloning and global analysis of protein localization in the fission yeast Schizosaccharomyces pombe.</title>
        <authorList>
            <person name="Matsuyama A."/>
            <person name="Arai R."/>
            <person name="Yashiroda Y."/>
            <person name="Shirai A."/>
            <person name="Kamata A."/>
            <person name="Sekido S."/>
            <person name="Kobayashi Y."/>
            <person name="Hashimoto A."/>
            <person name="Hamamoto M."/>
            <person name="Hiraoka Y."/>
            <person name="Horinouchi S."/>
            <person name="Yoshida M."/>
        </authorList>
    </citation>
    <scope>SUBCELLULAR LOCATION [LARGE SCALE ANALYSIS]</scope>
</reference>
<reference key="3">
    <citation type="journal article" date="2008" name="J. Proteome Res.">
        <title>Phosphoproteome analysis of fission yeast.</title>
        <authorList>
            <person name="Wilson-Grady J.T."/>
            <person name="Villen J."/>
            <person name="Gygi S.P."/>
        </authorList>
    </citation>
    <scope>PHOSPHORYLATION [LARGE SCALE ANALYSIS] AT SER-301</scope>
    <scope>IDENTIFICATION BY MASS SPECTROMETRY</scope>
</reference>
<dbReference type="EC" id="3.1.1.23" evidence="1"/>
<dbReference type="EMBL" id="CU329672">
    <property type="protein sequence ID" value="CAA21960.1"/>
    <property type="molecule type" value="Genomic_DNA"/>
</dbReference>
<dbReference type="PIR" id="T41456">
    <property type="entry name" value="T41456"/>
</dbReference>
<dbReference type="RefSeq" id="NP_587904.1">
    <property type="nucleotide sequence ID" value="NM_001022896.2"/>
</dbReference>
<dbReference type="SMR" id="O94305"/>
<dbReference type="FunCoup" id="O94305">
    <property type="interactions" value="175"/>
</dbReference>
<dbReference type="IntAct" id="O94305">
    <property type="interactions" value="1"/>
</dbReference>
<dbReference type="STRING" id="284812.O94305"/>
<dbReference type="ESTHER" id="schpo-SPCC5E4.05C">
    <property type="family name" value="Monoglyceridelipase_lysophospholip"/>
</dbReference>
<dbReference type="iPTMnet" id="O94305"/>
<dbReference type="PaxDb" id="4896-SPCC5E4.05c.1"/>
<dbReference type="EnsemblFungi" id="SPCC5E4.05c.1">
    <property type="protein sequence ID" value="SPCC5E4.05c.1:pep"/>
    <property type="gene ID" value="SPCC5E4.05c"/>
</dbReference>
<dbReference type="GeneID" id="2538799"/>
<dbReference type="KEGG" id="spo:2538799"/>
<dbReference type="PomBase" id="SPCC5E4.05c">
    <property type="gene designation" value="mgl1"/>
</dbReference>
<dbReference type="VEuPathDB" id="FungiDB:SPCC5E4.05c"/>
<dbReference type="eggNOG" id="KOG1455">
    <property type="taxonomic scope" value="Eukaryota"/>
</dbReference>
<dbReference type="HOGENOM" id="CLU_026209_5_2_1"/>
<dbReference type="InParanoid" id="O94305"/>
<dbReference type="OMA" id="QNAQNLW"/>
<dbReference type="PhylomeDB" id="O94305"/>
<dbReference type="Reactome" id="R-SPO-1482883">
    <property type="pathway name" value="Acyl chain remodeling of DAG and TAG"/>
</dbReference>
<dbReference type="Reactome" id="R-SPO-426048">
    <property type="pathway name" value="Arachidonate production from DAG"/>
</dbReference>
<dbReference type="UniPathway" id="UPA00256"/>
<dbReference type="PRO" id="PR:O94305"/>
<dbReference type="Proteomes" id="UP000002485">
    <property type="component" value="Chromosome III"/>
</dbReference>
<dbReference type="GO" id="GO:0005737">
    <property type="term" value="C:cytoplasm"/>
    <property type="evidence" value="ECO:0007005"/>
    <property type="project" value="PomBase"/>
</dbReference>
<dbReference type="GO" id="GO:0005783">
    <property type="term" value="C:endoplasmic reticulum"/>
    <property type="evidence" value="ECO:0007669"/>
    <property type="project" value="UniProtKB-SubCell"/>
</dbReference>
<dbReference type="GO" id="GO:0005811">
    <property type="term" value="C:lipid droplet"/>
    <property type="evidence" value="ECO:0007669"/>
    <property type="project" value="UniProtKB-SubCell"/>
</dbReference>
<dbReference type="GO" id="GO:0016020">
    <property type="term" value="C:membrane"/>
    <property type="evidence" value="ECO:0000318"/>
    <property type="project" value="GO_Central"/>
</dbReference>
<dbReference type="GO" id="GO:0005741">
    <property type="term" value="C:mitochondrial outer membrane"/>
    <property type="evidence" value="ECO:0000266"/>
    <property type="project" value="PomBase"/>
</dbReference>
<dbReference type="GO" id="GO:0047372">
    <property type="term" value="F:monoacylglycerol lipase activity"/>
    <property type="evidence" value="ECO:0000318"/>
    <property type="project" value="GO_Central"/>
</dbReference>
<dbReference type="GO" id="GO:0019433">
    <property type="term" value="P:triglyceride catabolic process"/>
    <property type="evidence" value="ECO:0000305"/>
    <property type="project" value="PomBase"/>
</dbReference>
<dbReference type="FunFam" id="3.40.50.1820:FF:000117">
    <property type="entry name" value="Monoglyceride lipase, putative"/>
    <property type="match status" value="1"/>
</dbReference>
<dbReference type="Gene3D" id="3.40.50.1820">
    <property type="entry name" value="alpha/beta hydrolase"/>
    <property type="match status" value="1"/>
</dbReference>
<dbReference type="InterPro" id="IPR000073">
    <property type="entry name" value="AB_hydrolase_1"/>
</dbReference>
<dbReference type="InterPro" id="IPR029058">
    <property type="entry name" value="AB_hydrolase_fold"/>
</dbReference>
<dbReference type="InterPro" id="IPR022742">
    <property type="entry name" value="Hydrolase_4"/>
</dbReference>
<dbReference type="InterPro" id="IPR051044">
    <property type="entry name" value="MAG_DAG_Lipase"/>
</dbReference>
<dbReference type="PANTHER" id="PTHR11614">
    <property type="entry name" value="PHOSPHOLIPASE-RELATED"/>
    <property type="match status" value="1"/>
</dbReference>
<dbReference type="Pfam" id="PF12146">
    <property type="entry name" value="Hydrolase_4"/>
    <property type="match status" value="1"/>
</dbReference>
<dbReference type="PRINTS" id="PR00111">
    <property type="entry name" value="ABHYDROLASE"/>
</dbReference>
<dbReference type="SUPFAM" id="SSF53474">
    <property type="entry name" value="alpha/beta-Hydrolases"/>
    <property type="match status" value="1"/>
</dbReference>
<proteinExistence type="evidence at protein level"/>
<protein>
    <recommendedName>
        <fullName evidence="6">Putative monoglyceride lipase</fullName>
        <shortName>MGL</shortName>
        <ecNumber evidence="1">3.1.1.23</ecNumber>
    </recommendedName>
    <alternativeName>
        <fullName evidence="1">Fatty acid ethyl ester hydrolase</fullName>
        <shortName>FAEE hydrolase</shortName>
    </alternativeName>
    <alternativeName>
        <fullName>Monoacylglycerol hydrolase</fullName>
        <shortName>MAG hydrolase</shortName>
        <shortName>MGH</shortName>
    </alternativeName>
    <alternativeName>
        <fullName>Monoacylglycerol lipase</fullName>
        <shortName>MAG lipase</shortName>
        <shortName>MAGL</shortName>
    </alternativeName>
</protein>
<gene>
    <name type="primary">mgl1</name>
    <name type="ORF">SPCC5E4.05c</name>
</gene>
<accession>O94305</accession>
<feature type="chain" id="PRO_0000312656" description="Putative monoglyceride lipase">
    <location>
        <begin position="1"/>
        <end position="378"/>
    </location>
</feature>
<feature type="region of interest" description="Disordered" evidence="3">
    <location>
        <begin position="276"/>
        <end position="350"/>
    </location>
</feature>
<feature type="short sequence motif" description="GXSXG" evidence="1">
    <location>
        <begin position="97"/>
        <end position="101"/>
    </location>
</feature>
<feature type="compositionally biased region" description="Basic and acidic residues" evidence="3">
    <location>
        <begin position="276"/>
        <end position="292"/>
    </location>
</feature>
<feature type="compositionally biased region" description="Low complexity" evidence="3">
    <location>
        <begin position="293"/>
        <end position="305"/>
    </location>
</feature>
<feature type="compositionally biased region" description="Polar residues" evidence="3">
    <location>
        <begin position="341"/>
        <end position="350"/>
    </location>
</feature>
<feature type="active site" description="Nucleophile" evidence="1">
    <location>
        <position position="99"/>
    </location>
</feature>
<feature type="active site" description="Charge relay system" evidence="1">
    <location>
        <position position="219"/>
    </location>
</feature>
<feature type="active site" description="Charge relay system" evidence="1">
    <location>
        <position position="249"/>
    </location>
</feature>
<feature type="modified residue" description="Phosphoserine" evidence="5">
    <location>
        <position position="301"/>
    </location>
</feature>